<accession>Q3ZBW7</accession>
<proteinExistence type="evidence at transcript level"/>
<evidence type="ECO:0000250" key="1">
    <source>
        <dbReference type="UniProtKB" id="Q9CWE0"/>
    </source>
</evidence>
<evidence type="ECO:0000250" key="2">
    <source>
        <dbReference type="UniProtKB" id="Q9H019"/>
    </source>
</evidence>
<evidence type="ECO:0000305" key="3"/>
<dbReference type="EMBL" id="BC103064">
    <property type="protein sequence ID" value="AAI03065.1"/>
    <property type="molecule type" value="mRNA"/>
</dbReference>
<dbReference type="RefSeq" id="NP_001029504.1">
    <property type="nucleotide sequence ID" value="NM_001034332.2"/>
</dbReference>
<dbReference type="RefSeq" id="XP_005203149.1">
    <property type="nucleotide sequence ID" value="XM_005203092.5"/>
</dbReference>
<dbReference type="RefSeq" id="XP_005203150.1">
    <property type="nucleotide sequence ID" value="XM_005203093.3"/>
</dbReference>
<dbReference type="RefSeq" id="XP_005203152.1">
    <property type="nucleotide sequence ID" value="XM_005203095.5"/>
</dbReference>
<dbReference type="RefSeq" id="XP_015315586.1">
    <property type="nucleotide sequence ID" value="XM_015460100.3"/>
</dbReference>
<dbReference type="SMR" id="Q3ZBW7"/>
<dbReference type="FunCoup" id="Q3ZBW7">
    <property type="interactions" value="814"/>
</dbReference>
<dbReference type="STRING" id="9913.ENSBTAP00000040498"/>
<dbReference type="iPTMnet" id="Q3ZBW7"/>
<dbReference type="PaxDb" id="9913-ENSBTAP00000053884"/>
<dbReference type="GeneID" id="508852"/>
<dbReference type="KEGG" id="bta:508852"/>
<dbReference type="CTD" id="56181"/>
<dbReference type="VEuPathDB" id="HostDB:ENSBTAG00000021781"/>
<dbReference type="eggNOG" id="ENOG502QRAC">
    <property type="taxonomic scope" value="Eukaryota"/>
</dbReference>
<dbReference type="HOGENOM" id="CLU_083041_0_0_1"/>
<dbReference type="InParanoid" id="Q3ZBW7"/>
<dbReference type="OMA" id="LRHKWKP"/>
<dbReference type="OrthoDB" id="9930891at2759"/>
<dbReference type="Proteomes" id="UP000009136">
    <property type="component" value="Chromosome 2"/>
</dbReference>
<dbReference type="Bgee" id="ENSBTAG00000021781">
    <property type="expression patterns" value="Expressed in cardiac ventricle and 107 other cell types or tissues"/>
</dbReference>
<dbReference type="GO" id="GO:0005741">
    <property type="term" value="C:mitochondrial outer membrane"/>
    <property type="evidence" value="ECO:0007669"/>
    <property type="project" value="UniProtKB-SubCell"/>
</dbReference>
<dbReference type="GO" id="GO:0005739">
    <property type="term" value="C:mitochondrion"/>
    <property type="evidence" value="ECO:0000318"/>
    <property type="project" value="GO_Central"/>
</dbReference>
<dbReference type="GO" id="GO:0009060">
    <property type="term" value="P:aerobic respiration"/>
    <property type="evidence" value="ECO:0000318"/>
    <property type="project" value="GO_Central"/>
</dbReference>
<dbReference type="GO" id="GO:0000266">
    <property type="term" value="P:mitochondrial fission"/>
    <property type="evidence" value="ECO:0000318"/>
    <property type="project" value="GO_Central"/>
</dbReference>
<dbReference type="InterPro" id="IPR007972">
    <property type="entry name" value="Mtfr1"/>
</dbReference>
<dbReference type="PANTHER" id="PTHR14215:SF3">
    <property type="entry name" value="MITOCHONDRIAL FISSION REGULATOR 1-LIKE"/>
    <property type="match status" value="1"/>
</dbReference>
<dbReference type="PANTHER" id="PTHR14215">
    <property type="entry name" value="PROTEIN OF UNKNOWN FUNCTION DUF729"/>
    <property type="match status" value="1"/>
</dbReference>
<dbReference type="Pfam" id="PF05308">
    <property type="entry name" value="Mito_fiss_reg"/>
    <property type="match status" value="1"/>
</dbReference>
<protein>
    <recommendedName>
        <fullName>Mitochondrial fission regulator 1-like</fullName>
    </recommendedName>
</protein>
<sequence>MEANVTIPIWQNKPHGAARSVVRRIGTNLPLKPCPRASFETLPNISDLCLRDVPPVPTLADIAWIAADEEETYARVRSDTRPLRHTWKPSPLIVMQRNASVPNLRGSEERLLALKKPALPALSRTTELQDELSHLRSQIAKIVAADAASASLTPDFLSPGSSNVSSPLPCFGSSFHSTTSFVISDITEETEIEVPELPSVPLLCSASPECCKPEHKATCSSSEEDDCVSLSKASSFADMMGILKDFHRMKQSQDLSRSSLKEEDPAVLISEVLRRKFALKEEDISRKGN</sequence>
<reference key="1">
    <citation type="submission" date="2005-08" db="EMBL/GenBank/DDBJ databases">
        <authorList>
            <consortium name="NIH - Mammalian Gene Collection (MGC) project"/>
        </authorList>
    </citation>
    <scope>NUCLEOTIDE SEQUENCE [LARGE SCALE MRNA]</scope>
    <source>
        <strain>Hereford</strain>
        <tissue>Thymus</tissue>
    </source>
</reference>
<gene>
    <name type="primary">MTFR1L</name>
    <name type="synonym">FAM54B</name>
</gene>
<comment type="function">
    <text evidence="2">Mitochondrial protein required for adaptation of miochondrial dynamics to metabolic changes. Regulates mitochondrial morphology at steady state and mediates AMPK-dependent stress-induced mitochondrial fragmentation via the control of OPA1 levels.</text>
</comment>
<comment type="subcellular location">
    <subcellularLocation>
        <location evidence="2">Mitochondrion outer membrane</location>
        <topology evidence="2">Peripheral membrane protein</topology>
        <orientation evidence="2">Cytoplasmic side</orientation>
    </subcellularLocation>
</comment>
<comment type="PTM">
    <text evidence="2">Phosphorylated by AMPK. Upon stress, phosphorylation by AMPK is sufficient to induce mitochondrial fragmentation.</text>
</comment>
<comment type="similarity">
    <text evidence="3">Belongs to the MTFR1 family.</text>
</comment>
<feature type="chain" id="PRO_0000341565" description="Mitochondrial fission regulator 1-like">
    <location>
        <begin position="1"/>
        <end position="289"/>
    </location>
</feature>
<feature type="modified residue" description="Phosphothreonine" evidence="2">
    <location>
        <position position="27"/>
    </location>
</feature>
<feature type="modified residue" description="Phosphoserine" evidence="2">
    <location>
        <position position="38"/>
    </location>
</feature>
<feature type="modified residue" description="Phosphoserine" evidence="2">
    <location>
        <position position="100"/>
    </location>
</feature>
<feature type="modified residue" description="Phosphoserine" evidence="2">
    <location>
        <position position="107"/>
    </location>
</feature>
<feature type="modified residue" description="Phosphoserine" evidence="1">
    <location>
        <position position="221"/>
    </location>
</feature>
<feature type="modified residue" description="Phosphoserine" evidence="1">
    <location>
        <position position="222"/>
    </location>
</feature>
<feature type="modified residue" description="Phosphoserine" evidence="2">
    <location>
        <position position="235"/>
    </location>
</feature>
<feature type="modified residue" description="Phosphoserine" evidence="2">
    <location>
        <position position="258"/>
    </location>
</feature>
<feature type="modified residue" description="Phosphoserine" evidence="2">
    <location>
        <position position="270"/>
    </location>
</feature>
<organism>
    <name type="scientific">Bos taurus</name>
    <name type="common">Bovine</name>
    <dbReference type="NCBI Taxonomy" id="9913"/>
    <lineage>
        <taxon>Eukaryota</taxon>
        <taxon>Metazoa</taxon>
        <taxon>Chordata</taxon>
        <taxon>Craniata</taxon>
        <taxon>Vertebrata</taxon>
        <taxon>Euteleostomi</taxon>
        <taxon>Mammalia</taxon>
        <taxon>Eutheria</taxon>
        <taxon>Laurasiatheria</taxon>
        <taxon>Artiodactyla</taxon>
        <taxon>Ruminantia</taxon>
        <taxon>Pecora</taxon>
        <taxon>Bovidae</taxon>
        <taxon>Bovinae</taxon>
        <taxon>Bos</taxon>
    </lineage>
</organism>
<name>MFR1L_BOVIN</name>
<keyword id="KW-0472">Membrane</keyword>
<keyword id="KW-0496">Mitochondrion</keyword>
<keyword id="KW-1000">Mitochondrion outer membrane</keyword>
<keyword id="KW-0597">Phosphoprotein</keyword>
<keyword id="KW-1185">Reference proteome</keyword>